<dbReference type="EC" id="2.3.1.-" evidence="1"/>
<dbReference type="EMBL" id="CP000023">
    <property type="protein sequence ID" value="AAV60453.1"/>
    <property type="molecule type" value="Genomic_DNA"/>
</dbReference>
<dbReference type="RefSeq" id="WP_002950436.1">
    <property type="nucleotide sequence ID" value="NC_006448.1"/>
</dbReference>
<dbReference type="PDB" id="6BUG">
    <property type="method" value="X-ray"/>
    <property type="resolution" value="3.27 A"/>
    <property type="chains" value="C/D/F/G=1-415"/>
</dbReference>
<dbReference type="PDB" id="6BUH">
    <property type="method" value="X-ray"/>
    <property type="resolution" value="3.15 A"/>
    <property type="chains" value="C/D/F/H=1-415"/>
</dbReference>
<dbReference type="PDB" id="6BUI">
    <property type="method" value="X-ray"/>
    <property type="resolution" value="3.27 A"/>
    <property type="chains" value="A/B/C/D=1-415"/>
</dbReference>
<dbReference type="PDB" id="8JEM">
    <property type="method" value="EM"/>
    <property type="resolution" value="3.23 A"/>
    <property type="chains" value="A/B/C/D=1-415"/>
</dbReference>
<dbReference type="PDB" id="8JES">
    <property type="method" value="EM"/>
    <property type="resolution" value="3.42 A"/>
    <property type="chains" value="A/B/C/D=1-415"/>
</dbReference>
<dbReference type="PDB" id="8JF2">
    <property type="method" value="EM"/>
    <property type="resolution" value="3.50 A"/>
    <property type="chains" value="A/B/C/D=1-415"/>
</dbReference>
<dbReference type="PDBsum" id="6BUG"/>
<dbReference type="PDBsum" id="6BUH"/>
<dbReference type="PDBsum" id="6BUI"/>
<dbReference type="PDBsum" id="8JEM"/>
<dbReference type="PDBsum" id="8JES"/>
<dbReference type="PDBsum" id="8JF2"/>
<dbReference type="EMDB" id="EMD-36192"/>
<dbReference type="EMDB" id="EMD-36194"/>
<dbReference type="EMDB" id="EMD-36207"/>
<dbReference type="SMR" id="Q5M4V4"/>
<dbReference type="STRING" id="264199.stu0762"/>
<dbReference type="GeneID" id="66898660"/>
<dbReference type="KEGG" id="stl:stu0762"/>
<dbReference type="PATRIC" id="fig|264199.4.peg.770"/>
<dbReference type="eggNOG" id="COG1696">
    <property type="taxonomic scope" value="Bacteria"/>
</dbReference>
<dbReference type="HOGENOM" id="CLU_025255_2_0_9"/>
<dbReference type="UniPathway" id="UPA00556"/>
<dbReference type="Proteomes" id="UP000001170">
    <property type="component" value="Chromosome"/>
</dbReference>
<dbReference type="GO" id="GO:0005886">
    <property type="term" value="C:plasma membrane"/>
    <property type="evidence" value="ECO:0007669"/>
    <property type="project" value="UniProtKB-SubCell"/>
</dbReference>
<dbReference type="GO" id="GO:0016746">
    <property type="term" value="F:acyltransferase activity"/>
    <property type="evidence" value="ECO:0007669"/>
    <property type="project" value="UniProtKB-KW"/>
</dbReference>
<dbReference type="GO" id="GO:0070395">
    <property type="term" value="P:lipoteichoic acid biosynthetic process"/>
    <property type="evidence" value="ECO:0007669"/>
    <property type="project" value="UniProtKB-UniPathway"/>
</dbReference>
<dbReference type="InterPro" id="IPR024194">
    <property type="entry name" value="Ac/AlaTfrase_AlgI/DltB"/>
</dbReference>
<dbReference type="InterPro" id="IPR024024">
    <property type="entry name" value="DltB"/>
</dbReference>
<dbReference type="InterPro" id="IPR051085">
    <property type="entry name" value="MB_O-acyltransferase"/>
</dbReference>
<dbReference type="InterPro" id="IPR004299">
    <property type="entry name" value="MBOAT_fam"/>
</dbReference>
<dbReference type="NCBIfam" id="TIGR04091">
    <property type="entry name" value="LTA_dltB"/>
    <property type="match status" value="1"/>
</dbReference>
<dbReference type="PANTHER" id="PTHR13285">
    <property type="entry name" value="ACYLTRANSFERASE"/>
    <property type="match status" value="1"/>
</dbReference>
<dbReference type="PANTHER" id="PTHR13285:SF23">
    <property type="entry name" value="TEICHOIC ACID D-ALANYLTRANSFERASE"/>
    <property type="match status" value="1"/>
</dbReference>
<dbReference type="Pfam" id="PF03062">
    <property type="entry name" value="MBOAT"/>
    <property type="match status" value="1"/>
</dbReference>
<dbReference type="PIRSF" id="PIRSF016636">
    <property type="entry name" value="AlgI_DltB"/>
    <property type="match status" value="1"/>
</dbReference>
<dbReference type="PIRSF" id="PIRSF500216">
    <property type="entry name" value="DltB"/>
    <property type="match status" value="1"/>
</dbReference>
<accession>Q5M4V4</accession>
<feature type="chain" id="PRO_0000450783" description="Teichoic acid D-alanyltransferase">
    <location>
        <begin position="1"/>
        <end position="415"/>
    </location>
</feature>
<feature type="topological domain" description="Extracellular" evidence="4">
    <location>
        <begin position="1"/>
        <end position="16"/>
    </location>
</feature>
<feature type="transmembrane region" description="Helical" evidence="1 6 7 8">
    <location>
        <begin position="17"/>
        <end position="36"/>
    </location>
</feature>
<feature type="topological domain" description="Cytoplasmic" evidence="4">
    <location>
        <begin position="37"/>
        <end position="40"/>
    </location>
</feature>
<feature type="transmembrane region" description="Helical" evidence="1 6 7 8">
    <location>
        <begin position="41"/>
        <end position="56"/>
    </location>
</feature>
<feature type="topological domain" description="Extracellular" evidence="4">
    <location>
        <begin position="57"/>
        <end position="60"/>
    </location>
</feature>
<feature type="transmembrane region" description="Helical" evidence="1 6 7 8">
    <location>
        <begin position="61"/>
        <end position="87"/>
    </location>
</feature>
<feature type="topological domain" description="Cytoplasmic" evidence="4">
    <location>
        <begin position="88"/>
        <end position="90"/>
    </location>
</feature>
<feature type="transmembrane region" description="Helical" evidence="1 6 7 8">
    <location>
        <begin position="91"/>
        <end position="115"/>
    </location>
</feature>
<feature type="topological domain" description="Extracellular" evidence="4">
    <location>
        <begin position="116"/>
        <end position="125"/>
    </location>
</feature>
<feature type="transmembrane region" description="Helical" evidence="1 6 7 8">
    <location>
        <begin position="126"/>
        <end position="142"/>
    </location>
</feature>
<feature type="topological domain" description="Cytoplasmic" evidence="4">
    <location>
        <begin position="143"/>
        <end position="149"/>
    </location>
</feature>
<feature type="intramembrane region" evidence="1 6 7 8">
    <location>
        <begin position="150"/>
        <end position="179"/>
    </location>
</feature>
<feature type="topological domain" description="Cytoplasmic" evidence="4">
    <location>
        <begin position="180"/>
        <end position="183"/>
    </location>
</feature>
<feature type="transmembrane region" description="Helical" evidence="1 6 7 8">
    <location>
        <begin position="184"/>
        <end position="227"/>
    </location>
</feature>
<feature type="topological domain" description="Extracellular" evidence="4">
    <location>
        <begin position="228"/>
        <end position="232"/>
    </location>
</feature>
<feature type="transmembrane region" description="Helical" evidence="1 6 7 8">
    <location>
        <begin position="233"/>
        <end position="264"/>
    </location>
</feature>
<feature type="topological domain" description="Cytoplasmic" evidence="4">
    <location>
        <begin position="265"/>
        <end position="274"/>
    </location>
</feature>
<feature type="intramembrane region" evidence="1 6 7 8">
    <location>
        <begin position="275"/>
        <end position="311"/>
    </location>
</feature>
<feature type="topological domain" description="Cytoplasmic" evidence="4">
    <location>
        <begin position="312"/>
        <end position="316"/>
    </location>
</feature>
<feature type="transmembrane region" description="Helical" evidence="1 6 7 8">
    <location>
        <begin position="317"/>
        <end position="336"/>
    </location>
</feature>
<feature type="topological domain" description="Extracellular" evidence="4">
    <location>
        <begin position="337"/>
        <end position="339"/>
    </location>
</feature>
<feature type="transmembrane region" description="Helical" evidence="1 6 7 8">
    <location>
        <begin position="340"/>
        <end position="373"/>
    </location>
</feature>
<feature type="topological domain" description="Cytoplasmic" evidence="4">
    <location>
        <begin position="374"/>
        <end position="381"/>
    </location>
</feature>
<feature type="transmembrane region" description="Helical" evidence="1 6 7 8">
    <location>
        <begin position="382"/>
        <end position="404"/>
    </location>
</feature>
<feature type="topological domain" description="Extracellular" evidence="4">
    <location>
        <begin position="405"/>
        <end position="415"/>
    </location>
</feature>
<feature type="active site" evidence="1">
    <location>
        <position position="336"/>
    </location>
</feature>
<feature type="mutagenesis site" description="Reduced binding to DltC." evidence="1">
    <original>VI</original>
    <variation>DD</variation>
    <location>
        <begin position="305"/>
        <end position="306"/>
    </location>
</feature>
<feature type="mutagenesis site" description="Reduced binding to DltC." evidence="1">
    <original>V</original>
    <variation>D</variation>
    <location>
        <position position="305"/>
    </location>
</feature>
<feature type="helix" evidence="9">
    <location>
        <begin position="2"/>
        <end position="7"/>
    </location>
</feature>
<feature type="helix" evidence="9">
    <location>
        <begin position="19"/>
        <end position="34"/>
    </location>
</feature>
<feature type="turn" evidence="9">
    <location>
        <begin position="35"/>
        <end position="37"/>
    </location>
</feature>
<feature type="helix" evidence="9">
    <location>
        <begin position="41"/>
        <end position="56"/>
    </location>
</feature>
<feature type="turn" evidence="9">
    <location>
        <begin position="59"/>
        <end position="62"/>
    </location>
</feature>
<feature type="helix" evidence="9">
    <location>
        <begin position="63"/>
        <end position="87"/>
    </location>
</feature>
<feature type="helix" evidence="9">
    <location>
        <begin position="91"/>
        <end position="114"/>
    </location>
</feature>
<feature type="strand" evidence="9">
    <location>
        <begin position="115"/>
        <end position="117"/>
    </location>
</feature>
<feature type="helix" evidence="9">
    <location>
        <begin position="126"/>
        <end position="141"/>
    </location>
</feature>
<feature type="strand" evidence="10">
    <location>
        <begin position="142"/>
        <end position="144"/>
    </location>
</feature>
<feature type="helix" evidence="9">
    <location>
        <begin position="150"/>
        <end position="157"/>
    </location>
</feature>
<feature type="strand" evidence="9">
    <location>
        <begin position="163"/>
        <end position="165"/>
    </location>
</feature>
<feature type="helix" evidence="9">
    <location>
        <begin position="171"/>
        <end position="179"/>
    </location>
</feature>
<feature type="helix" evidence="9">
    <location>
        <begin position="184"/>
        <end position="206"/>
    </location>
</feature>
<feature type="helix" evidence="9">
    <location>
        <begin position="208"/>
        <end position="213"/>
    </location>
</feature>
<feature type="turn" evidence="9">
    <location>
        <begin position="214"/>
        <end position="216"/>
    </location>
</feature>
<feature type="helix" evidence="9">
    <location>
        <begin position="217"/>
        <end position="227"/>
    </location>
</feature>
<feature type="helix" evidence="9">
    <location>
        <begin position="233"/>
        <end position="263"/>
    </location>
</feature>
<feature type="helix" evidence="9">
    <location>
        <begin position="275"/>
        <end position="277"/>
    </location>
</feature>
<feature type="helix" evidence="9">
    <location>
        <begin position="281"/>
        <end position="284"/>
    </location>
</feature>
<feature type="turn" evidence="9">
    <location>
        <begin position="285"/>
        <end position="287"/>
    </location>
</feature>
<feature type="helix" evidence="9">
    <location>
        <begin position="290"/>
        <end position="299"/>
    </location>
</feature>
<feature type="helix" evidence="9">
    <location>
        <begin position="301"/>
        <end position="310"/>
    </location>
</feature>
<feature type="strand" evidence="9">
    <location>
        <begin position="314"/>
        <end position="316"/>
    </location>
</feature>
<feature type="helix" evidence="9">
    <location>
        <begin position="317"/>
        <end position="336"/>
    </location>
</feature>
<feature type="helix" evidence="9">
    <location>
        <begin position="340"/>
        <end position="372"/>
    </location>
</feature>
<feature type="helix" evidence="9">
    <location>
        <begin position="382"/>
        <end position="403"/>
    </location>
</feature>
<feature type="helix" evidence="9">
    <location>
        <begin position="406"/>
        <end position="412"/>
    </location>
</feature>
<name>DLTB_STRT2</name>
<keyword id="KW-0002">3D-structure</keyword>
<keyword id="KW-0012">Acyltransferase</keyword>
<keyword id="KW-1003">Cell membrane</keyword>
<keyword id="KW-0472">Membrane</keyword>
<keyword id="KW-1185">Reference proteome</keyword>
<keyword id="KW-0808">Transferase</keyword>
<keyword id="KW-0812">Transmembrane</keyword>
<keyword id="KW-1133">Transmembrane helix</keyword>
<evidence type="ECO:0000269" key="1">
    <source>
    </source>
</evidence>
<evidence type="ECO:0000303" key="2">
    <source>
    </source>
</evidence>
<evidence type="ECO:0000305" key="3"/>
<evidence type="ECO:0000305" key="4">
    <source>
    </source>
</evidence>
<evidence type="ECO:0000312" key="5">
    <source>
        <dbReference type="EMBL" id="AAV60453.1"/>
    </source>
</evidence>
<evidence type="ECO:0007744" key="6">
    <source>
        <dbReference type="PDB" id="6BUG"/>
    </source>
</evidence>
<evidence type="ECO:0007744" key="7">
    <source>
        <dbReference type="PDB" id="6BUH"/>
    </source>
</evidence>
<evidence type="ECO:0007744" key="8">
    <source>
        <dbReference type="PDB" id="6BUI"/>
    </source>
</evidence>
<evidence type="ECO:0007829" key="9">
    <source>
        <dbReference type="PDB" id="6BUH"/>
    </source>
</evidence>
<evidence type="ECO:0007829" key="10">
    <source>
        <dbReference type="PDB" id="8JEM"/>
    </source>
</evidence>
<reference key="1">
    <citation type="journal article" date="2004" name="Nat. Biotechnol.">
        <title>Complete sequence and comparative genome analysis of the dairy bacterium Streptococcus thermophilus.</title>
        <authorList>
            <person name="Bolotin A."/>
            <person name="Quinquis B."/>
            <person name="Renault P."/>
            <person name="Sorokin A."/>
            <person name="Ehrlich S.D."/>
            <person name="Kulakauskas S."/>
            <person name="Lapidus A."/>
            <person name="Goltsman E."/>
            <person name="Mazur M."/>
            <person name="Pusch G.D."/>
            <person name="Fonstein M."/>
            <person name="Overbeek R."/>
            <person name="Kyprides N."/>
            <person name="Purnelle B."/>
            <person name="Prozzi D."/>
            <person name="Ngui K."/>
            <person name="Masuy D."/>
            <person name="Hancy F."/>
            <person name="Burteau S."/>
            <person name="Boutry M."/>
            <person name="Delcour J."/>
            <person name="Goffeau A."/>
            <person name="Hols P."/>
        </authorList>
    </citation>
    <scope>NUCLEOTIDE SEQUENCE [LARGE SCALE GENOMIC DNA]</scope>
    <source>
        <strain>ATCC BAA-250 / LMG 18311</strain>
    </source>
</reference>
<reference evidence="6 7 8" key="2">
    <citation type="journal article" date="2018" name="Nature">
        <title>Crystal structure of a membrane-bound O-acyltransferase.</title>
        <authorList>
            <person name="Ma D."/>
            <person name="Wang Z."/>
            <person name="Merrikh C.N."/>
            <person name="Lang K.S."/>
            <person name="Lu P."/>
            <person name="Li X."/>
            <person name="Merrikh H."/>
            <person name="Rao Z."/>
            <person name="Xu W."/>
        </authorList>
    </citation>
    <scope>X-RAY CRYSTALLOGRAPHY (3.15 ANGSTROMS) IN COMPLEX WITH DLTC</scope>
    <scope>FUNCTION</scope>
    <scope>CATALYTIC ACTIVITY</scope>
    <scope>ACTIVE SITE</scope>
    <scope>DOMAIN</scope>
    <scope>MUTAGENESIS OF 305-VAL-ILE-306 AND VAL-305</scope>
</reference>
<organism>
    <name type="scientific">Streptococcus thermophilus (strain ATCC BAA-250 / LMG 18311)</name>
    <dbReference type="NCBI Taxonomy" id="264199"/>
    <lineage>
        <taxon>Bacteria</taxon>
        <taxon>Bacillati</taxon>
        <taxon>Bacillota</taxon>
        <taxon>Bacilli</taxon>
        <taxon>Lactobacillales</taxon>
        <taxon>Streptococcaceae</taxon>
        <taxon>Streptococcus</taxon>
    </lineage>
</organism>
<comment type="function">
    <text evidence="1">O-acyltransferase that catalyzes D-alanylation of both teichoic acid and lipoteichoic acid (LTA) (PubMed:30283133). D-alanylation of LTA plays an important role in modulating the properties of the cell wall in Gram-positive bacteria, influencing the net charge of the cell wall (PubMed:30283133). Catalyzes D-alanylation from DltC carrier protein (PubMed:30283133).</text>
</comment>
<comment type="pathway">
    <text evidence="1">Cell wall biogenesis; lipoteichoic acid biosynthesis.</text>
</comment>
<comment type="subcellular location">
    <subcellularLocation>
        <location evidence="4">Cell membrane</location>
        <topology evidence="1">Multi-pass membrane protein</topology>
    </subcellularLocation>
</comment>
<comment type="domain">
    <text evidence="1">Consists of a ring of transmembrane domains, which shield a highly conserved extracellular structural funnel extending into the middle of the lipid bilayer (PubMed:30283133). The conserved catalytic His residue is located at the bottom of this funnel and is connected to the intracellular DltC through a narrow tunnel (PubMed:30283133).</text>
</comment>
<comment type="similarity">
    <text evidence="3">Belongs to the membrane-bound acyltransferase family.</text>
</comment>
<proteinExistence type="evidence at protein level"/>
<gene>
    <name evidence="2" type="primary">dltB</name>
    <name evidence="5" type="ordered locus">stu0762</name>
</gene>
<protein>
    <recommendedName>
        <fullName evidence="3">Teichoic acid D-alanyltransferase</fullName>
        <ecNumber evidence="1">2.3.1.-</ecNumber>
    </recommendedName>
</protein>
<sequence length="415" mass="48794">MIDFLKQLPHLEPYGNPFYFIYLGIALLPIFIGLFFKKRFAIYECLVSITFIVLALTGTHASQILALLFYIVWQIIWVYSYKRYRSQRDNKWVFYLHSFLVVLPLILVKVEPTINGTQSLLNFLGISYLTFRAVGMIIEMRDGVLKEFTLGEFLRFMLFMPTFTSGPIDRFKRFNEDYQSIPNRDELLNMLEQAVKYIMLGFLYKFVLAQIFGSMLLPPLKAQALSQGGIFNLPTLGVMYVYGFDLFFDFAGYSMFALAVSNLMGIKSPINFDKPFISRDMKEFWNRWHMSLSFWFRDFVFMRLVIVLMRNKVFKNRNTTSNVAYIINMMVMGFWHGITWYYIAYGIFHGIGLVINDAWLRKKKTINKDRKKAGLKPLPENKWTKALGIFITFNTVMLSFLIFSGFLNDLWFTKK</sequence>